<evidence type="ECO:0000255" key="1">
    <source>
        <dbReference type="HAMAP-Rule" id="MF_01176"/>
    </source>
</evidence>
<evidence type="ECO:0000256" key="2">
    <source>
        <dbReference type="SAM" id="MobiDB-lite"/>
    </source>
</evidence>
<name>ISCR_SHIBS</name>
<reference key="1">
    <citation type="journal article" date="2005" name="Nucleic Acids Res.">
        <title>Genome dynamics and diversity of Shigella species, the etiologic agents of bacillary dysentery.</title>
        <authorList>
            <person name="Yang F."/>
            <person name="Yang J."/>
            <person name="Zhang X."/>
            <person name="Chen L."/>
            <person name="Jiang Y."/>
            <person name="Yan Y."/>
            <person name="Tang X."/>
            <person name="Wang J."/>
            <person name="Xiong Z."/>
            <person name="Dong J."/>
            <person name="Xue Y."/>
            <person name="Zhu Y."/>
            <person name="Xu X."/>
            <person name="Sun L."/>
            <person name="Chen S."/>
            <person name="Nie H."/>
            <person name="Peng J."/>
            <person name="Xu J."/>
            <person name="Wang Y."/>
            <person name="Yuan Z."/>
            <person name="Wen Y."/>
            <person name="Yao Z."/>
            <person name="Shen Y."/>
            <person name="Qiang B."/>
            <person name="Hou Y."/>
            <person name="Yu J."/>
            <person name="Jin Q."/>
        </authorList>
    </citation>
    <scope>NUCLEOTIDE SEQUENCE [LARGE SCALE GENOMIC DNA]</scope>
    <source>
        <strain>Sb227</strain>
    </source>
</reference>
<comment type="function">
    <text evidence="1">Regulates the transcription of several operons and genes involved in the biogenesis of Fe-S clusters and Fe-S-containing proteins.</text>
</comment>
<comment type="cofactor">
    <cofactor evidence="1">
        <name>[2Fe-2S] cluster</name>
        <dbReference type="ChEBI" id="CHEBI:190135"/>
    </cofactor>
    <text evidence="1">Binds 1 [2Fe-2S] cluster.</text>
</comment>
<keyword id="KW-0001">2Fe-2S</keyword>
<keyword id="KW-0010">Activator</keyword>
<keyword id="KW-0238">DNA-binding</keyword>
<keyword id="KW-0408">Iron</keyword>
<keyword id="KW-0411">Iron-sulfur</keyword>
<keyword id="KW-0479">Metal-binding</keyword>
<keyword id="KW-0678">Repressor</keyword>
<keyword id="KW-0804">Transcription</keyword>
<keyword id="KW-0805">Transcription regulation</keyword>
<protein>
    <recommendedName>
        <fullName evidence="1">HTH-type transcriptional regulator IscR</fullName>
    </recommendedName>
</protein>
<gene>
    <name evidence="1" type="primary">iscR</name>
    <name type="ordered locus">SBO_2555</name>
</gene>
<dbReference type="EMBL" id="CP000036">
    <property type="protein sequence ID" value="ABB67099.1"/>
    <property type="molecule type" value="Genomic_DNA"/>
</dbReference>
<dbReference type="RefSeq" id="WP_001241357.1">
    <property type="nucleotide sequence ID" value="NC_007613.1"/>
</dbReference>
<dbReference type="SMR" id="Q31XV9"/>
<dbReference type="GeneID" id="86947421"/>
<dbReference type="KEGG" id="sbo:SBO_2555"/>
<dbReference type="HOGENOM" id="CLU_107144_0_0_6"/>
<dbReference type="Proteomes" id="UP000007067">
    <property type="component" value="Chromosome"/>
</dbReference>
<dbReference type="GO" id="GO:0005829">
    <property type="term" value="C:cytosol"/>
    <property type="evidence" value="ECO:0007669"/>
    <property type="project" value="TreeGrafter"/>
</dbReference>
<dbReference type="GO" id="GO:0051537">
    <property type="term" value="F:2 iron, 2 sulfur cluster binding"/>
    <property type="evidence" value="ECO:0007669"/>
    <property type="project" value="UniProtKB-KW"/>
</dbReference>
<dbReference type="GO" id="GO:0003700">
    <property type="term" value="F:DNA-binding transcription factor activity"/>
    <property type="evidence" value="ECO:0007669"/>
    <property type="project" value="UniProtKB-UniRule"/>
</dbReference>
<dbReference type="GO" id="GO:0003690">
    <property type="term" value="F:double-stranded DNA binding"/>
    <property type="evidence" value="ECO:0007669"/>
    <property type="project" value="UniProtKB-UniRule"/>
</dbReference>
<dbReference type="GO" id="GO:0005506">
    <property type="term" value="F:iron ion binding"/>
    <property type="evidence" value="ECO:0007669"/>
    <property type="project" value="UniProtKB-UniRule"/>
</dbReference>
<dbReference type="FunFam" id="1.10.10.10:FF:000026">
    <property type="entry name" value="HTH-type transcriptional regulator IscR"/>
    <property type="match status" value="1"/>
</dbReference>
<dbReference type="Gene3D" id="1.10.10.10">
    <property type="entry name" value="Winged helix-like DNA-binding domain superfamily/Winged helix DNA-binding domain"/>
    <property type="match status" value="1"/>
</dbReference>
<dbReference type="HAMAP" id="MF_01176">
    <property type="entry name" value="HTH_type_IscR"/>
    <property type="match status" value="1"/>
</dbReference>
<dbReference type="InterPro" id="IPR010242">
    <property type="entry name" value="TF_HTH_IscR"/>
</dbReference>
<dbReference type="InterPro" id="IPR030489">
    <property type="entry name" value="TR_Rrf2-type_CS"/>
</dbReference>
<dbReference type="InterPro" id="IPR000944">
    <property type="entry name" value="Tscrpt_reg_Rrf2"/>
</dbReference>
<dbReference type="InterPro" id="IPR036388">
    <property type="entry name" value="WH-like_DNA-bd_sf"/>
</dbReference>
<dbReference type="InterPro" id="IPR036390">
    <property type="entry name" value="WH_DNA-bd_sf"/>
</dbReference>
<dbReference type="NCBIfam" id="TIGR02010">
    <property type="entry name" value="IscR"/>
    <property type="match status" value="1"/>
</dbReference>
<dbReference type="NCBIfam" id="NF008110">
    <property type="entry name" value="PRK10857.1"/>
    <property type="match status" value="1"/>
</dbReference>
<dbReference type="NCBIfam" id="TIGR00738">
    <property type="entry name" value="rrf2_super"/>
    <property type="match status" value="1"/>
</dbReference>
<dbReference type="PANTHER" id="PTHR33221:SF5">
    <property type="entry name" value="HTH-TYPE TRANSCRIPTIONAL REGULATOR ISCR"/>
    <property type="match status" value="1"/>
</dbReference>
<dbReference type="PANTHER" id="PTHR33221">
    <property type="entry name" value="WINGED HELIX-TURN-HELIX TRANSCRIPTIONAL REGULATOR, RRF2 FAMILY"/>
    <property type="match status" value="1"/>
</dbReference>
<dbReference type="Pfam" id="PF02082">
    <property type="entry name" value="Rrf2"/>
    <property type="match status" value="1"/>
</dbReference>
<dbReference type="SUPFAM" id="SSF46785">
    <property type="entry name" value="Winged helix' DNA-binding domain"/>
    <property type="match status" value="1"/>
</dbReference>
<dbReference type="PROSITE" id="PS01332">
    <property type="entry name" value="HTH_RRF2_1"/>
    <property type="match status" value="1"/>
</dbReference>
<dbReference type="PROSITE" id="PS51197">
    <property type="entry name" value="HTH_RRF2_2"/>
    <property type="match status" value="1"/>
</dbReference>
<sequence length="162" mass="17337">MRLTSKGRYAVTAMLDVALNSEAGPVPLADISERQGISLSYLEQLFSRLRKNGLVSSVRGPGGGYLLGKDASSIAVGEVISAVDESVDATRCQGKGGCQGGDKCLTHALWRDLSDRLTGFLNNITLGELVNNQEVLDVSGRQHTHDAPRTRTQDAIDVKLRA</sequence>
<accession>Q31XV9</accession>
<feature type="chain" id="PRO_0000268926" description="HTH-type transcriptional regulator IscR">
    <location>
        <begin position="1"/>
        <end position="162"/>
    </location>
</feature>
<feature type="domain" description="HTH rrf2-type" evidence="1">
    <location>
        <begin position="2"/>
        <end position="131"/>
    </location>
</feature>
<feature type="DNA-binding region" description="H-T-H motif" evidence="1">
    <location>
        <begin position="28"/>
        <end position="51"/>
    </location>
</feature>
<feature type="region of interest" description="Disordered" evidence="2">
    <location>
        <begin position="140"/>
        <end position="162"/>
    </location>
</feature>
<feature type="compositionally biased region" description="Basic and acidic residues" evidence="2">
    <location>
        <begin position="143"/>
        <end position="162"/>
    </location>
</feature>
<feature type="binding site" evidence="1">
    <location>
        <position position="92"/>
    </location>
    <ligand>
        <name>[2Fe-2S] cluster</name>
        <dbReference type="ChEBI" id="CHEBI:190135"/>
    </ligand>
</feature>
<feature type="binding site" evidence="1">
    <location>
        <position position="98"/>
    </location>
    <ligand>
        <name>[2Fe-2S] cluster</name>
        <dbReference type="ChEBI" id="CHEBI:190135"/>
    </ligand>
</feature>
<feature type="binding site" evidence="1">
    <location>
        <position position="104"/>
    </location>
    <ligand>
        <name>[2Fe-2S] cluster</name>
        <dbReference type="ChEBI" id="CHEBI:190135"/>
    </ligand>
</feature>
<organism>
    <name type="scientific">Shigella boydii serotype 4 (strain Sb227)</name>
    <dbReference type="NCBI Taxonomy" id="300268"/>
    <lineage>
        <taxon>Bacteria</taxon>
        <taxon>Pseudomonadati</taxon>
        <taxon>Pseudomonadota</taxon>
        <taxon>Gammaproteobacteria</taxon>
        <taxon>Enterobacterales</taxon>
        <taxon>Enterobacteriaceae</taxon>
        <taxon>Shigella</taxon>
    </lineage>
</organism>
<proteinExistence type="inferred from homology"/>